<dbReference type="EC" id="3.6.1.23" evidence="1"/>
<dbReference type="EMBL" id="CP001280">
    <property type="protein sequence ID" value="ACK51177.1"/>
    <property type="molecule type" value="Genomic_DNA"/>
</dbReference>
<dbReference type="RefSeq" id="WP_012591246.1">
    <property type="nucleotide sequence ID" value="NC_011666.1"/>
</dbReference>
<dbReference type="SMR" id="B8ET39"/>
<dbReference type="STRING" id="395965.Msil_2243"/>
<dbReference type="KEGG" id="msl:Msil_2243"/>
<dbReference type="eggNOG" id="COG0756">
    <property type="taxonomic scope" value="Bacteria"/>
</dbReference>
<dbReference type="HOGENOM" id="CLU_068508_1_2_5"/>
<dbReference type="UniPathway" id="UPA00610">
    <property type="reaction ID" value="UER00666"/>
</dbReference>
<dbReference type="Proteomes" id="UP000002257">
    <property type="component" value="Chromosome"/>
</dbReference>
<dbReference type="GO" id="GO:0004170">
    <property type="term" value="F:dUTP diphosphatase activity"/>
    <property type="evidence" value="ECO:0007669"/>
    <property type="project" value="UniProtKB-UniRule"/>
</dbReference>
<dbReference type="GO" id="GO:0000287">
    <property type="term" value="F:magnesium ion binding"/>
    <property type="evidence" value="ECO:0007669"/>
    <property type="project" value="UniProtKB-UniRule"/>
</dbReference>
<dbReference type="GO" id="GO:0006226">
    <property type="term" value="P:dUMP biosynthetic process"/>
    <property type="evidence" value="ECO:0007669"/>
    <property type="project" value="UniProtKB-UniRule"/>
</dbReference>
<dbReference type="GO" id="GO:0046081">
    <property type="term" value="P:dUTP catabolic process"/>
    <property type="evidence" value="ECO:0007669"/>
    <property type="project" value="InterPro"/>
</dbReference>
<dbReference type="CDD" id="cd07557">
    <property type="entry name" value="trimeric_dUTPase"/>
    <property type="match status" value="1"/>
</dbReference>
<dbReference type="Gene3D" id="2.70.40.10">
    <property type="match status" value="1"/>
</dbReference>
<dbReference type="HAMAP" id="MF_00116">
    <property type="entry name" value="dUTPase_bact"/>
    <property type="match status" value="1"/>
</dbReference>
<dbReference type="InterPro" id="IPR008181">
    <property type="entry name" value="dUTPase"/>
</dbReference>
<dbReference type="InterPro" id="IPR029054">
    <property type="entry name" value="dUTPase-like"/>
</dbReference>
<dbReference type="InterPro" id="IPR036157">
    <property type="entry name" value="dUTPase-like_sf"/>
</dbReference>
<dbReference type="InterPro" id="IPR033704">
    <property type="entry name" value="dUTPase_trimeric"/>
</dbReference>
<dbReference type="NCBIfam" id="TIGR00576">
    <property type="entry name" value="dut"/>
    <property type="match status" value="1"/>
</dbReference>
<dbReference type="NCBIfam" id="NF001862">
    <property type="entry name" value="PRK00601.1"/>
    <property type="match status" value="1"/>
</dbReference>
<dbReference type="PANTHER" id="PTHR11241">
    <property type="entry name" value="DEOXYURIDINE 5'-TRIPHOSPHATE NUCLEOTIDOHYDROLASE"/>
    <property type="match status" value="1"/>
</dbReference>
<dbReference type="PANTHER" id="PTHR11241:SF0">
    <property type="entry name" value="DEOXYURIDINE 5'-TRIPHOSPHATE NUCLEOTIDOHYDROLASE"/>
    <property type="match status" value="1"/>
</dbReference>
<dbReference type="Pfam" id="PF00692">
    <property type="entry name" value="dUTPase"/>
    <property type="match status" value="1"/>
</dbReference>
<dbReference type="SUPFAM" id="SSF51283">
    <property type="entry name" value="dUTPase-like"/>
    <property type="match status" value="1"/>
</dbReference>
<protein>
    <recommendedName>
        <fullName evidence="1">Deoxyuridine 5'-triphosphate nucleotidohydrolase</fullName>
        <shortName evidence="1">dUTPase</shortName>
        <ecNumber evidence="1">3.6.1.23</ecNumber>
    </recommendedName>
    <alternativeName>
        <fullName evidence="1">dUTP pyrophosphatase</fullName>
    </alternativeName>
</protein>
<feature type="chain" id="PRO_1000119241" description="Deoxyuridine 5'-triphosphate nucleotidohydrolase">
    <location>
        <begin position="1"/>
        <end position="160"/>
    </location>
</feature>
<feature type="binding site" evidence="1">
    <location>
        <begin position="72"/>
        <end position="74"/>
    </location>
    <ligand>
        <name>substrate</name>
    </ligand>
</feature>
<feature type="binding site" evidence="1">
    <location>
        <position position="85"/>
    </location>
    <ligand>
        <name>substrate</name>
    </ligand>
</feature>
<feature type="binding site" evidence="1">
    <location>
        <begin position="89"/>
        <end position="91"/>
    </location>
    <ligand>
        <name>substrate</name>
    </ligand>
</feature>
<sequence length="160" mass="16402">MSEPLTIGIKRLPHGADLPLPAYQSAGAAGLDLLAAIAPGSKLTLEPGERRLVPTGLVLQIPPSHEGQLRPRSGLALKAGVTVLNAPGTIDSDYRGEVGVLLINFGAEPFEIARGERIAQLIIAPVTRAVLVETDGLEATARGAGGFGSTGAAAIGETRR</sequence>
<reference key="1">
    <citation type="journal article" date="2010" name="J. Bacteriol.">
        <title>Complete genome sequence of the aerobic facultative methanotroph Methylocella silvestris BL2.</title>
        <authorList>
            <person name="Chen Y."/>
            <person name="Crombie A."/>
            <person name="Rahman M.T."/>
            <person name="Dedysh S.N."/>
            <person name="Liesack W."/>
            <person name="Stott M.B."/>
            <person name="Alam M."/>
            <person name="Theisen A.R."/>
            <person name="Murrell J.C."/>
            <person name="Dunfield P.F."/>
        </authorList>
    </citation>
    <scope>NUCLEOTIDE SEQUENCE [LARGE SCALE GENOMIC DNA]</scope>
    <source>
        <strain>DSM 15510 / CIP 108128 / LMG 27833 / NCIMB 13906 / BL2</strain>
    </source>
</reference>
<keyword id="KW-0378">Hydrolase</keyword>
<keyword id="KW-0460">Magnesium</keyword>
<keyword id="KW-0479">Metal-binding</keyword>
<keyword id="KW-0546">Nucleotide metabolism</keyword>
<keyword id="KW-1185">Reference proteome</keyword>
<accession>B8ET39</accession>
<name>DUT_METSB</name>
<gene>
    <name evidence="1" type="primary">dut</name>
    <name type="ordered locus">Msil_2243</name>
</gene>
<evidence type="ECO:0000255" key="1">
    <source>
        <dbReference type="HAMAP-Rule" id="MF_00116"/>
    </source>
</evidence>
<comment type="function">
    <text evidence="1">This enzyme is involved in nucleotide metabolism: it produces dUMP, the immediate precursor of thymidine nucleotides and it decreases the intracellular concentration of dUTP so that uracil cannot be incorporated into DNA.</text>
</comment>
<comment type="catalytic activity">
    <reaction evidence="1">
        <text>dUTP + H2O = dUMP + diphosphate + H(+)</text>
        <dbReference type="Rhea" id="RHEA:10248"/>
        <dbReference type="ChEBI" id="CHEBI:15377"/>
        <dbReference type="ChEBI" id="CHEBI:15378"/>
        <dbReference type="ChEBI" id="CHEBI:33019"/>
        <dbReference type="ChEBI" id="CHEBI:61555"/>
        <dbReference type="ChEBI" id="CHEBI:246422"/>
        <dbReference type="EC" id="3.6.1.23"/>
    </reaction>
</comment>
<comment type="cofactor">
    <cofactor evidence="1">
        <name>Mg(2+)</name>
        <dbReference type="ChEBI" id="CHEBI:18420"/>
    </cofactor>
</comment>
<comment type="pathway">
    <text evidence="1">Pyrimidine metabolism; dUMP biosynthesis; dUMP from dCTP (dUTP route): step 2/2.</text>
</comment>
<comment type="similarity">
    <text evidence="1">Belongs to the dUTPase family.</text>
</comment>
<organism>
    <name type="scientific">Methylocella silvestris (strain DSM 15510 / CIP 108128 / LMG 27833 / NCIMB 13906 / BL2)</name>
    <dbReference type="NCBI Taxonomy" id="395965"/>
    <lineage>
        <taxon>Bacteria</taxon>
        <taxon>Pseudomonadati</taxon>
        <taxon>Pseudomonadota</taxon>
        <taxon>Alphaproteobacteria</taxon>
        <taxon>Hyphomicrobiales</taxon>
        <taxon>Beijerinckiaceae</taxon>
        <taxon>Methylocella</taxon>
    </lineage>
</organism>
<proteinExistence type="inferred from homology"/>